<feature type="chain" id="PRO_0000134172" description="Small ribosomal subunit protein uS2">
    <location>
        <begin position="1"/>
        <end position="235"/>
    </location>
</feature>
<protein>
    <recommendedName>
        <fullName evidence="1">Small ribosomal subunit protein uS2</fullName>
    </recommendedName>
    <alternativeName>
        <fullName evidence="2">30S ribosomal protein S2</fullName>
    </alternativeName>
</protein>
<keyword id="KW-1185">Reference proteome</keyword>
<keyword id="KW-0687">Ribonucleoprotein</keyword>
<keyword id="KW-0689">Ribosomal protein</keyword>
<gene>
    <name evidence="1" type="primary">rpsB</name>
    <name type="ordered locus">GK1249</name>
</gene>
<sequence>MSVISMKQLLEAGVHFGHQTRRWNPKMKKYIFTERNGIYIIDLQKTVKKVEEAYNFVRELAANGGKILFVGTKKQAQESVKEEAERCDMFYVNQRWLGGTLTNFATIQKRIKRLREIEKMEEDGIFDVLPKKEVIRLKKEKERLEKFLGGIKDMKELPDALFVIDPRKERIAVAEARKLNIPIIGIVDTNCDPDEIDYVIPANDDAIRAVKLLTSKIADAVLEAKQGEEAAVAAE</sequence>
<dbReference type="EMBL" id="BA000043">
    <property type="protein sequence ID" value="BAD75534.1"/>
    <property type="molecule type" value="Genomic_DNA"/>
</dbReference>
<dbReference type="RefSeq" id="WP_011230749.1">
    <property type="nucleotide sequence ID" value="NC_006510.1"/>
</dbReference>
<dbReference type="SMR" id="Q5L0K2"/>
<dbReference type="STRING" id="235909.GK1249"/>
<dbReference type="KEGG" id="gka:GK1249"/>
<dbReference type="PATRIC" id="fig|235909.7.peg.1349"/>
<dbReference type="eggNOG" id="COG0052">
    <property type="taxonomic scope" value="Bacteria"/>
</dbReference>
<dbReference type="HOGENOM" id="CLU_040318_1_2_9"/>
<dbReference type="Proteomes" id="UP000001172">
    <property type="component" value="Chromosome"/>
</dbReference>
<dbReference type="GO" id="GO:0022627">
    <property type="term" value="C:cytosolic small ribosomal subunit"/>
    <property type="evidence" value="ECO:0007669"/>
    <property type="project" value="TreeGrafter"/>
</dbReference>
<dbReference type="GO" id="GO:0003735">
    <property type="term" value="F:structural constituent of ribosome"/>
    <property type="evidence" value="ECO:0007669"/>
    <property type="project" value="InterPro"/>
</dbReference>
<dbReference type="GO" id="GO:0006412">
    <property type="term" value="P:translation"/>
    <property type="evidence" value="ECO:0007669"/>
    <property type="project" value="UniProtKB-UniRule"/>
</dbReference>
<dbReference type="CDD" id="cd01425">
    <property type="entry name" value="RPS2"/>
    <property type="match status" value="1"/>
</dbReference>
<dbReference type="FunFam" id="1.10.287.610:FF:000001">
    <property type="entry name" value="30S ribosomal protein S2"/>
    <property type="match status" value="1"/>
</dbReference>
<dbReference type="Gene3D" id="3.40.50.10490">
    <property type="entry name" value="Glucose-6-phosphate isomerase like protein, domain 1"/>
    <property type="match status" value="1"/>
</dbReference>
<dbReference type="Gene3D" id="1.10.287.610">
    <property type="entry name" value="Helix hairpin bin"/>
    <property type="match status" value="1"/>
</dbReference>
<dbReference type="HAMAP" id="MF_00291_B">
    <property type="entry name" value="Ribosomal_uS2_B"/>
    <property type="match status" value="1"/>
</dbReference>
<dbReference type="InterPro" id="IPR001865">
    <property type="entry name" value="Ribosomal_uS2"/>
</dbReference>
<dbReference type="InterPro" id="IPR005706">
    <property type="entry name" value="Ribosomal_uS2_bac/mit/plastid"/>
</dbReference>
<dbReference type="InterPro" id="IPR018130">
    <property type="entry name" value="Ribosomal_uS2_CS"/>
</dbReference>
<dbReference type="InterPro" id="IPR023591">
    <property type="entry name" value="Ribosomal_uS2_flav_dom_sf"/>
</dbReference>
<dbReference type="NCBIfam" id="TIGR01011">
    <property type="entry name" value="rpsB_bact"/>
    <property type="match status" value="1"/>
</dbReference>
<dbReference type="PANTHER" id="PTHR12534">
    <property type="entry name" value="30S RIBOSOMAL PROTEIN S2 PROKARYOTIC AND ORGANELLAR"/>
    <property type="match status" value="1"/>
</dbReference>
<dbReference type="PANTHER" id="PTHR12534:SF0">
    <property type="entry name" value="SMALL RIBOSOMAL SUBUNIT PROTEIN US2M"/>
    <property type="match status" value="1"/>
</dbReference>
<dbReference type="Pfam" id="PF00318">
    <property type="entry name" value="Ribosomal_S2"/>
    <property type="match status" value="1"/>
</dbReference>
<dbReference type="PRINTS" id="PR00395">
    <property type="entry name" value="RIBOSOMALS2"/>
</dbReference>
<dbReference type="SUPFAM" id="SSF52313">
    <property type="entry name" value="Ribosomal protein S2"/>
    <property type="match status" value="1"/>
</dbReference>
<dbReference type="PROSITE" id="PS00962">
    <property type="entry name" value="RIBOSOMAL_S2_1"/>
    <property type="match status" value="1"/>
</dbReference>
<dbReference type="PROSITE" id="PS00963">
    <property type="entry name" value="RIBOSOMAL_S2_2"/>
    <property type="match status" value="1"/>
</dbReference>
<comment type="similarity">
    <text evidence="1">Belongs to the universal ribosomal protein uS2 family.</text>
</comment>
<proteinExistence type="inferred from homology"/>
<reference key="1">
    <citation type="journal article" date="2004" name="Nucleic Acids Res.">
        <title>Thermoadaptation trait revealed by the genome sequence of thermophilic Geobacillus kaustophilus.</title>
        <authorList>
            <person name="Takami H."/>
            <person name="Takaki Y."/>
            <person name="Chee G.-J."/>
            <person name="Nishi S."/>
            <person name="Shimamura S."/>
            <person name="Suzuki H."/>
            <person name="Matsui S."/>
            <person name="Uchiyama I."/>
        </authorList>
    </citation>
    <scope>NUCLEOTIDE SEQUENCE [LARGE SCALE GENOMIC DNA]</scope>
    <source>
        <strain>HTA426</strain>
    </source>
</reference>
<organism>
    <name type="scientific">Geobacillus kaustophilus (strain HTA426)</name>
    <dbReference type="NCBI Taxonomy" id="235909"/>
    <lineage>
        <taxon>Bacteria</taxon>
        <taxon>Bacillati</taxon>
        <taxon>Bacillota</taxon>
        <taxon>Bacilli</taxon>
        <taxon>Bacillales</taxon>
        <taxon>Anoxybacillaceae</taxon>
        <taxon>Geobacillus</taxon>
        <taxon>Geobacillus thermoleovorans group</taxon>
    </lineage>
</organism>
<accession>Q5L0K2</accession>
<evidence type="ECO:0000255" key="1">
    <source>
        <dbReference type="HAMAP-Rule" id="MF_00291"/>
    </source>
</evidence>
<evidence type="ECO:0000305" key="2"/>
<name>RS2_GEOKA</name>